<keyword id="KW-0067">ATP-binding</keyword>
<keyword id="KW-0315">Glutamine amidotransferase</keyword>
<keyword id="KW-0436">Ligase</keyword>
<keyword id="KW-0460">Magnesium</keyword>
<keyword id="KW-0479">Metal-binding</keyword>
<keyword id="KW-0547">Nucleotide-binding</keyword>
<keyword id="KW-0665">Pyrimidine biosynthesis</keyword>
<keyword id="KW-1185">Reference proteome</keyword>
<organism>
    <name type="scientific">Jannaschia sp. (strain CCS1)</name>
    <dbReference type="NCBI Taxonomy" id="290400"/>
    <lineage>
        <taxon>Bacteria</taxon>
        <taxon>Pseudomonadati</taxon>
        <taxon>Pseudomonadota</taxon>
        <taxon>Alphaproteobacteria</taxon>
        <taxon>Rhodobacterales</taxon>
        <taxon>Roseobacteraceae</taxon>
        <taxon>Jannaschia</taxon>
    </lineage>
</organism>
<evidence type="ECO:0000255" key="1">
    <source>
        <dbReference type="HAMAP-Rule" id="MF_01227"/>
    </source>
</evidence>
<protein>
    <recommendedName>
        <fullName evidence="1">CTP synthase</fullName>
        <ecNumber evidence="1">6.3.4.2</ecNumber>
    </recommendedName>
    <alternativeName>
        <fullName evidence="1">Cytidine 5'-triphosphate synthase</fullName>
    </alternativeName>
    <alternativeName>
        <fullName evidence="1">Cytidine triphosphate synthetase</fullName>
        <shortName evidence="1">CTP synthetase</shortName>
        <shortName evidence="1">CTPS</shortName>
    </alternativeName>
    <alternativeName>
        <fullName evidence="1">UTP--ammonia ligase</fullName>
    </alternativeName>
</protein>
<feature type="chain" id="PRO_0000266137" description="CTP synthase">
    <location>
        <begin position="1"/>
        <end position="547"/>
    </location>
</feature>
<feature type="domain" description="Glutamine amidotransferase type-1" evidence="1">
    <location>
        <begin position="291"/>
        <end position="546"/>
    </location>
</feature>
<feature type="region of interest" description="Amidoligase domain" evidence="1">
    <location>
        <begin position="1"/>
        <end position="265"/>
    </location>
</feature>
<feature type="active site" description="Nucleophile; for glutamine hydrolysis" evidence="1">
    <location>
        <position position="380"/>
    </location>
</feature>
<feature type="active site" evidence="1">
    <location>
        <position position="519"/>
    </location>
</feature>
<feature type="active site" evidence="1">
    <location>
        <position position="521"/>
    </location>
</feature>
<feature type="binding site" evidence="1">
    <location>
        <position position="13"/>
    </location>
    <ligand>
        <name>CTP</name>
        <dbReference type="ChEBI" id="CHEBI:37563"/>
        <note>allosteric inhibitor</note>
    </ligand>
</feature>
<feature type="binding site" evidence="1">
    <location>
        <position position="13"/>
    </location>
    <ligand>
        <name>UTP</name>
        <dbReference type="ChEBI" id="CHEBI:46398"/>
    </ligand>
</feature>
<feature type="binding site" evidence="1">
    <location>
        <begin position="14"/>
        <end position="19"/>
    </location>
    <ligand>
        <name>ATP</name>
        <dbReference type="ChEBI" id="CHEBI:30616"/>
    </ligand>
</feature>
<feature type="binding site" evidence="1">
    <location>
        <position position="71"/>
    </location>
    <ligand>
        <name>ATP</name>
        <dbReference type="ChEBI" id="CHEBI:30616"/>
    </ligand>
</feature>
<feature type="binding site" evidence="1">
    <location>
        <position position="71"/>
    </location>
    <ligand>
        <name>Mg(2+)</name>
        <dbReference type="ChEBI" id="CHEBI:18420"/>
    </ligand>
</feature>
<feature type="binding site" evidence="1">
    <location>
        <position position="139"/>
    </location>
    <ligand>
        <name>Mg(2+)</name>
        <dbReference type="ChEBI" id="CHEBI:18420"/>
    </ligand>
</feature>
<feature type="binding site" evidence="1">
    <location>
        <begin position="146"/>
        <end position="148"/>
    </location>
    <ligand>
        <name>CTP</name>
        <dbReference type="ChEBI" id="CHEBI:37563"/>
        <note>allosteric inhibitor</note>
    </ligand>
</feature>
<feature type="binding site" evidence="1">
    <location>
        <begin position="186"/>
        <end position="191"/>
    </location>
    <ligand>
        <name>CTP</name>
        <dbReference type="ChEBI" id="CHEBI:37563"/>
        <note>allosteric inhibitor</note>
    </ligand>
</feature>
<feature type="binding site" evidence="1">
    <location>
        <begin position="186"/>
        <end position="191"/>
    </location>
    <ligand>
        <name>UTP</name>
        <dbReference type="ChEBI" id="CHEBI:46398"/>
    </ligand>
</feature>
<feature type="binding site" evidence="1">
    <location>
        <position position="222"/>
    </location>
    <ligand>
        <name>CTP</name>
        <dbReference type="ChEBI" id="CHEBI:37563"/>
        <note>allosteric inhibitor</note>
    </ligand>
</feature>
<feature type="binding site" evidence="1">
    <location>
        <position position="222"/>
    </location>
    <ligand>
        <name>UTP</name>
        <dbReference type="ChEBI" id="CHEBI:46398"/>
    </ligand>
</feature>
<feature type="binding site" evidence="1">
    <location>
        <position position="353"/>
    </location>
    <ligand>
        <name>L-glutamine</name>
        <dbReference type="ChEBI" id="CHEBI:58359"/>
    </ligand>
</feature>
<feature type="binding site" evidence="1">
    <location>
        <begin position="381"/>
        <end position="384"/>
    </location>
    <ligand>
        <name>L-glutamine</name>
        <dbReference type="ChEBI" id="CHEBI:58359"/>
    </ligand>
</feature>
<feature type="binding site" evidence="1">
    <location>
        <position position="404"/>
    </location>
    <ligand>
        <name>L-glutamine</name>
        <dbReference type="ChEBI" id="CHEBI:58359"/>
    </ligand>
</feature>
<feature type="binding site" evidence="1">
    <location>
        <position position="474"/>
    </location>
    <ligand>
        <name>L-glutamine</name>
        <dbReference type="ChEBI" id="CHEBI:58359"/>
    </ligand>
</feature>
<gene>
    <name evidence="1" type="primary">pyrG</name>
    <name type="ordered locus">Jann_3181</name>
</gene>
<dbReference type="EC" id="6.3.4.2" evidence="1"/>
<dbReference type="EMBL" id="CP000264">
    <property type="protein sequence ID" value="ABD56098.1"/>
    <property type="molecule type" value="Genomic_DNA"/>
</dbReference>
<dbReference type="RefSeq" id="WP_011456302.1">
    <property type="nucleotide sequence ID" value="NC_007802.1"/>
</dbReference>
<dbReference type="SMR" id="Q28MG4"/>
<dbReference type="STRING" id="290400.Jann_3181"/>
<dbReference type="MEROPS" id="C26.964"/>
<dbReference type="KEGG" id="jan:Jann_3181"/>
<dbReference type="eggNOG" id="COG0504">
    <property type="taxonomic scope" value="Bacteria"/>
</dbReference>
<dbReference type="HOGENOM" id="CLU_011675_5_0_5"/>
<dbReference type="OrthoDB" id="9801107at2"/>
<dbReference type="UniPathway" id="UPA00159">
    <property type="reaction ID" value="UER00277"/>
</dbReference>
<dbReference type="Proteomes" id="UP000008326">
    <property type="component" value="Chromosome"/>
</dbReference>
<dbReference type="GO" id="GO:0005829">
    <property type="term" value="C:cytosol"/>
    <property type="evidence" value="ECO:0007669"/>
    <property type="project" value="TreeGrafter"/>
</dbReference>
<dbReference type="GO" id="GO:0005524">
    <property type="term" value="F:ATP binding"/>
    <property type="evidence" value="ECO:0007669"/>
    <property type="project" value="UniProtKB-KW"/>
</dbReference>
<dbReference type="GO" id="GO:0003883">
    <property type="term" value="F:CTP synthase activity"/>
    <property type="evidence" value="ECO:0007669"/>
    <property type="project" value="UniProtKB-UniRule"/>
</dbReference>
<dbReference type="GO" id="GO:0004359">
    <property type="term" value="F:glutaminase activity"/>
    <property type="evidence" value="ECO:0007669"/>
    <property type="project" value="RHEA"/>
</dbReference>
<dbReference type="GO" id="GO:0042802">
    <property type="term" value="F:identical protein binding"/>
    <property type="evidence" value="ECO:0007669"/>
    <property type="project" value="TreeGrafter"/>
</dbReference>
<dbReference type="GO" id="GO:0046872">
    <property type="term" value="F:metal ion binding"/>
    <property type="evidence" value="ECO:0007669"/>
    <property type="project" value="UniProtKB-KW"/>
</dbReference>
<dbReference type="GO" id="GO:0044210">
    <property type="term" value="P:'de novo' CTP biosynthetic process"/>
    <property type="evidence" value="ECO:0007669"/>
    <property type="project" value="UniProtKB-UniRule"/>
</dbReference>
<dbReference type="GO" id="GO:0019856">
    <property type="term" value="P:pyrimidine nucleobase biosynthetic process"/>
    <property type="evidence" value="ECO:0007669"/>
    <property type="project" value="TreeGrafter"/>
</dbReference>
<dbReference type="CDD" id="cd03113">
    <property type="entry name" value="CTPS_N"/>
    <property type="match status" value="1"/>
</dbReference>
<dbReference type="CDD" id="cd01746">
    <property type="entry name" value="GATase1_CTP_Synthase"/>
    <property type="match status" value="1"/>
</dbReference>
<dbReference type="FunFam" id="3.40.50.300:FF:000009">
    <property type="entry name" value="CTP synthase"/>
    <property type="match status" value="1"/>
</dbReference>
<dbReference type="FunFam" id="3.40.50.880:FF:000002">
    <property type="entry name" value="CTP synthase"/>
    <property type="match status" value="1"/>
</dbReference>
<dbReference type="Gene3D" id="3.40.50.880">
    <property type="match status" value="1"/>
</dbReference>
<dbReference type="Gene3D" id="3.40.50.300">
    <property type="entry name" value="P-loop containing nucleotide triphosphate hydrolases"/>
    <property type="match status" value="1"/>
</dbReference>
<dbReference type="HAMAP" id="MF_01227">
    <property type="entry name" value="PyrG"/>
    <property type="match status" value="1"/>
</dbReference>
<dbReference type="InterPro" id="IPR029062">
    <property type="entry name" value="Class_I_gatase-like"/>
</dbReference>
<dbReference type="InterPro" id="IPR004468">
    <property type="entry name" value="CTP_synthase"/>
</dbReference>
<dbReference type="InterPro" id="IPR017456">
    <property type="entry name" value="CTP_synthase_N"/>
</dbReference>
<dbReference type="InterPro" id="IPR017926">
    <property type="entry name" value="GATASE"/>
</dbReference>
<dbReference type="InterPro" id="IPR033828">
    <property type="entry name" value="GATase1_CTP_Synthase"/>
</dbReference>
<dbReference type="InterPro" id="IPR027417">
    <property type="entry name" value="P-loop_NTPase"/>
</dbReference>
<dbReference type="NCBIfam" id="NF003792">
    <property type="entry name" value="PRK05380.1"/>
    <property type="match status" value="1"/>
</dbReference>
<dbReference type="NCBIfam" id="TIGR00337">
    <property type="entry name" value="PyrG"/>
    <property type="match status" value="1"/>
</dbReference>
<dbReference type="PANTHER" id="PTHR11550">
    <property type="entry name" value="CTP SYNTHASE"/>
    <property type="match status" value="1"/>
</dbReference>
<dbReference type="PANTHER" id="PTHR11550:SF0">
    <property type="entry name" value="CTP SYNTHASE-RELATED"/>
    <property type="match status" value="1"/>
</dbReference>
<dbReference type="Pfam" id="PF06418">
    <property type="entry name" value="CTP_synth_N"/>
    <property type="match status" value="1"/>
</dbReference>
<dbReference type="Pfam" id="PF00117">
    <property type="entry name" value="GATase"/>
    <property type="match status" value="1"/>
</dbReference>
<dbReference type="SUPFAM" id="SSF52317">
    <property type="entry name" value="Class I glutamine amidotransferase-like"/>
    <property type="match status" value="1"/>
</dbReference>
<dbReference type="SUPFAM" id="SSF52540">
    <property type="entry name" value="P-loop containing nucleoside triphosphate hydrolases"/>
    <property type="match status" value="1"/>
</dbReference>
<dbReference type="PROSITE" id="PS51273">
    <property type="entry name" value="GATASE_TYPE_1"/>
    <property type="match status" value="1"/>
</dbReference>
<name>PYRG_JANSC</name>
<sequence>MARFIFITGGVVSSLGKGLASAALGALLQARGFSVRLRKLDPYLNVDPGTMSPFEHGEVFVTDDGAETDLDLGHYERFTGVPASKTDSISSGRIYTNVLEKERRGDYLGKTIQVIPHVTNEIKDFINIGEDDVDFMLCEIGGTVGDIEGLPFFEAIRQFSQDKARGQCIFMHLTLLPFIKASGELKTKPTQHSVKELRSIGLAPDILVCRSEGPIPEKEREKLALFCNVRPDSVIAAQDLSSIYTAPLAYHREGLDQAVLDAFGITPAPKPNLSIWEDVADRINNPEGVVKVAIVGKYTQLEDAYKSIAEALTHGGMANRVKVEIEWVDAETFEREDPAPHLQGFHAILVPGGFGERGTEGKIKAAEFARTRKVPYLGICLGMQMAVIEAARNLAQLDDAGSEEFDHEAGKKRFTPVVYHLKEWVQGNHKVERKVGDDKGGTMRLGAYDAVLTEGSRVAEAYGTTAIEERHRHRYEVDTKYRDALEEKGLIFSGMSPDGALPEIVEVKDHPWFIGVQFHPELKSKPFEPHPLFRDFVRAAKENSRLV</sequence>
<reference key="1">
    <citation type="submission" date="2006-02" db="EMBL/GenBank/DDBJ databases">
        <title>Complete sequence of chromosome of Jannaschia sp. CCS1.</title>
        <authorList>
            <consortium name="US DOE Joint Genome Institute"/>
            <person name="Copeland A."/>
            <person name="Lucas S."/>
            <person name="Lapidus A."/>
            <person name="Barry K."/>
            <person name="Detter J.C."/>
            <person name="Glavina del Rio T."/>
            <person name="Hammon N."/>
            <person name="Israni S."/>
            <person name="Pitluck S."/>
            <person name="Brettin T."/>
            <person name="Bruce D."/>
            <person name="Han C."/>
            <person name="Tapia R."/>
            <person name="Gilna P."/>
            <person name="Chertkov O."/>
            <person name="Saunders E."/>
            <person name="Schmutz J."/>
            <person name="Larimer F."/>
            <person name="Land M."/>
            <person name="Kyrpides N."/>
            <person name="Lykidis A."/>
            <person name="Moran M.A."/>
            <person name="Belas R."/>
            <person name="Ye W."/>
            <person name="Buchan A."/>
            <person name="Gonzalez J.M."/>
            <person name="Schell M.A."/>
            <person name="Richardson P."/>
        </authorList>
    </citation>
    <scope>NUCLEOTIDE SEQUENCE [LARGE SCALE GENOMIC DNA]</scope>
    <source>
        <strain>CCS1</strain>
    </source>
</reference>
<accession>Q28MG4</accession>
<proteinExistence type="inferred from homology"/>
<comment type="function">
    <text evidence="1">Catalyzes the ATP-dependent amination of UTP to CTP with either L-glutamine or ammonia as the source of nitrogen. Regulates intracellular CTP levels through interactions with the four ribonucleotide triphosphates.</text>
</comment>
<comment type="catalytic activity">
    <reaction evidence="1">
        <text>UTP + L-glutamine + ATP + H2O = CTP + L-glutamate + ADP + phosphate + 2 H(+)</text>
        <dbReference type="Rhea" id="RHEA:26426"/>
        <dbReference type="ChEBI" id="CHEBI:15377"/>
        <dbReference type="ChEBI" id="CHEBI:15378"/>
        <dbReference type="ChEBI" id="CHEBI:29985"/>
        <dbReference type="ChEBI" id="CHEBI:30616"/>
        <dbReference type="ChEBI" id="CHEBI:37563"/>
        <dbReference type="ChEBI" id="CHEBI:43474"/>
        <dbReference type="ChEBI" id="CHEBI:46398"/>
        <dbReference type="ChEBI" id="CHEBI:58359"/>
        <dbReference type="ChEBI" id="CHEBI:456216"/>
        <dbReference type="EC" id="6.3.4.2"/>
    </reaction>
</comment>
<comment type="catalytic activity">
    <reaction evidence="1">
        <text>L-glutamine + H2O = L-glutamate + NH4(+)</text>
        <dbReference type="Rhea" id="RHEA:15889"/>
        <dbReference type="ChEBI" id="CHEBI:15377"/>
        <dbReference type="ChEBI" id="CHEBI:28938"/>
        <dbReference type="ChEBI" id="CHEBI:29985"/>
        <dbReference type="ChEBI" id="CHEBI:58359"/>
    </reaction>
</comment>
<comment type="catalytic activity">
    <reaction evidence="1">
        <text>UTP + NH4(+) + ATP = CTP + ADP + phosphate + 2 H(+)</text>
        <dbReference type="Rhea" id="RHEA:16597"/>
        <dbReference type="ChEBI" id="CHEBI:15378"/>
        <dbReference type="ChEBI" id="CHEBI:28938"/>
        <dbReference type="ChEBI" id="CHEBI:30616"/>
        <dbReference type="ChEBI" id="CHEBI:37563"/>
        <dbReference type="ChEBI" id="CHEBI:43474"/>
        <dbReference type="ChEBI" id="CHEBI:46398"/>
        <dbReference type="ChEBI" id="CHEBI:456216"/>
    </reaction>
</comment>
<comment type="activity regulation">
    <text evidence="1">Allosterically activated by GTP, when glutamine is the substrate; GTP has no effect on the reaction when ammonia is the substrate. The allosteric effector GTP functions by stabilizing the protein conformation that binds the tetrahedral intermediate(s) formed during glutamine hydrolysis. Inhibited by the product CTP, via allosteric rather than competitive inhibition.</text>
</comment>
<comment type="pathway">
    <text evidence="1">Pyrimidine metabolism; CTP biosynthesis via de novo pathway; CTP from UDP: step 2/2.</text>
</comment>
<comment type="subunit">
    <text evidence="1">Homotetramer.</text>
</comment>
<comment type="miscellaneous">
    <text evidence="1">CTPSs have evolved a hybrid strategy for distinguishing between UTP and CTP. The overlapping regions of the product feedback inhibitory and substrate sites recognize a common feature in both compounds, the triphosphate moiety. To differentiate isosteric substrate and product pyrimidine rings, an additional pocket far from the expected kinase/ligase catalytic site, specifically recognizes the cytosine and ribose portions of the product inhibitor.</text>
</comment>
<comment type="similarity">
    <text evidence="1">Belongs to the CTP synthase family.</text>
</comment>